<gene>
    <name type="primary">vnp</name>
</gene>
<accession>P83962</accession>
<organism>
    <name type="scientific">Acipenser transmontanus</name>
    <name type="common">White sturgeon</name>
    <dbReference type="NCBI Taxonomy" id="7904"/>
    <lineage>
        <taxon>Eukaryota</taxon>
        <taxon>Metazoa</taxon>
        <taxon>Chordata</taxon>
        <taxon>Craniata</taxon>
        <taxon>Vertebrata</taxon>
        <taxon>Euteleostomi</taxon>
        <taxon>Actinopterygii</taxon>
        <taxon>Chondrostei</taxon>
        <taxon>Acipenseriformes</taxon>
        <taxon>Acipenseridae</taxon>
        <taxon>Acipenser</taxon>
    </lineage>
</organism>
<evidence type="ECO:0000250" key="1"/>
<evidence type="ECO:0000255" key="2"/>
<evidence type="ECO:0000269" key="3">
    <source>
    </source>
</evidence>
<evidence type="ECO:0000305" key="4"/>
<feature type="signal peptide" evidence="2">
    <location>
        <begin position="1"/>
        <end position="24"/>
    </location>
</feature>
<feature type="propeptide" id="PRO_0000001611">
    <location>
        <begin position="25"/>
        <end status="unknown"/>
    </location>
</feature>
<feature type="peptide" id="PRO_0000001612" description="Ventricular natriuretic peptide">
    <location>
        <begin position="112"/>
        <end position="145"/>
    </location>
</feature>
<feature type="disulfide bond" evidence="1">
    <location>
        <begin position="117"/>
        <end position="133"/>
    </location>
</feature>
<keyword id="KW-1015">Disulfide bond</keyword>
<keyword id="KW-0372">Hormone</keyword>
<keyword id="KW-0964">Secreted</keyword>
<keyword id="KW-0732">Signal</keyword>
<keyword id="KW-0838">Vasoactive</keyword>
<dbReference type="EMBL" id="AB087730">
    <property type="protein sequence ID" value="BAD02837.1"/>
    <property type="molecule type" value="mRNA"/>
</dbReference>
<dbReference type="SMR" id="P83962"/>
<dbReference type="TCDB" id="1.C.46.2.2">
    <property type="family name" value="the c-type natriuretic peptide (cnp) family"/>
</dbReference>
<dbReference type="GO" id="GO:0005737">
    <property type="term" value="C:cytoplasm"/>
    <property type="evidence" value="ECO:0007669"/>
    <property type="project" value="TreeGrafter"/>
</dbReference>
<dbReference type="GO" id="GO:0005615">
    <property type="term" value="C:extracellular space"/>
    <property type="evidence" value="ECO:0007669"/>
    <property type="project" value="TreeGrafter"/>
</dbReference>
<dbReference type="GO" id="GO:0005179">
    <property type="term" value="F:hormone activity"/>
    <property type="evidence" value="ECO:0007669"/>
    <property type="project" value="UniProtKB-KW"/>
</dbReference>
<dbReference type="GO" id="GO:0051427">
    <property type="term" value="F:hormone receptor binding"/>
    <property type="evidence" value="ECO:0007669"/>
    <property type="project" value="TreeGrafter"/>
</dbReference>
<dbReference type="GO" id="GO:0097746">
    <property type="term" value="P:blood vessel diameter maintenance"/>
    <property type="evidence" value="ECO:0007669"/>
    <property type="project" value="UniProtKB-KW"/>
</dbReference>
<dbReference type="GO" id="GO:0006182">
    <property type="term" value="P:cGMP biosynthetic process"/>
    <property type="evidence" value="ECO:0007669"/>
    <property type="project" value="TreeGrafter"/>
</dbReference>
<dbReference type="GO" id="GO:0019934">
    <property type="term" value="P:cGMP-mediated signaling"/>
    <property type="evidence" value="ECO:0007669"/>
    <property type="project" value="TreeGrafter"/>
</dbReference>
<dbReference type="GO" id="GO:0003085">
    <property type="term" value="P:negative regulation of systemic arterial blood pressure"/>
    <property type="evidence" value="ECO:0007669"/>
    <property type="project" value="TreeGrafter"/>
</dbReference>
<dbReference type="GO" id="GO:0007218">
    <property type="term" value="P:neuropeptide signaling pathway"/>
    <property type="evidence" value="ECO:0007669"/>
    <property type="project" value="TreeGrafter"/>
</dbReference>
<dbReference type="GO" id="GO:0007168">
    <property type="term" value="P:receptor guanylyl cyclase signaling pathway"/>
    <property type="evidence" value="ECO:0007669"/>
    <property type="project" value="TreeGrafter"/>
</dbReference>
<dbReference type="InterPro" id="IPR000663">
    <property type="entry name" value="Natr_peptide"/>
</dbReference>
<dbReference type="InterPro" id="IPR030480">
    <property type="entry name" value="Natr_peptide_CS"/>
</dbReference>
<dbReference type="InterPro" id="IPR050787">
    <property type="entry name" value="Natriuretic_peptide"/>
</dbReference>
<dbReference type="PANTHER" id="PTHR14066">
    <property type="entry name" value="ATRIAL NATRIURETIC FACTOR PRECURSOR"/>
    <property type="match status" value="1"/>
</dbReference>
<dbReference type="PANTHER" id="PTHR14066:SF10">
    <property type="entry name" value="NATRIURETIC PEPTIDES B"/>
    <property type="match status" value="1"/>
</dbReference>
<dbReference type="Pfam" id="PF00212">
    <property type="entry name" value="ANP"/>
    <property type="match status" value="1"/>
</dbReference>
<dbReference type="SMART" id="SM00183">
    <property type="entry name" value="NAT_PEP"/>
    <property type="match status" value="1"/>
</dbReference>
<dbReference type="PROSITE" id="PS00263">
    <property type="entry name" value="NATRIURETIC_PEPTIDE"/>
    <property type="match status" value="1"/>
</dbReference>
<reference key="1">
    <citation type="journal article" date="2004" name="J. Mol. Endocrinol.">
        <title>Four natriuretic peptides (ANP, BNP, VNP and CNP) coexist in the sturgeon: identification of BNP in fish lineage.</title>
        <authorList>
            <person name="Kawakoshi A."/>
            <person name="Hyodo S."/>
            <person name="Inoue K."/>
            <person name="Kobayashi Y."/>
            <person name="Takei Y."/>
        </authorList>
    </citation>
    <scope>NUCLEOTIDE SEQUENCE [MRNA]</scope>
    <scope>TISSUE SPECIFICITY</scope>
    <source>
        <tissue>Heart ventricle</tissue>
    </source>
</reference>
<protein>
    <recommendedName>
        <fullName>Ventricular natriuretic peptide</fullName>
    </recommendedName>
</protein>
<proteinExistence type="evidence at transcript level"/>
<sequence>MRMGKIAVGYGFLLLLVFQLGVRASTLFNKYNVQELSSLKDLLERLEEKLSPGEESDVYAGSEDLVNDPEEDADLILDNVRKQAEKEFYKPAGFRDENLQRGRLRSIATSARSMNGCFGNRIERIGSWSSLGCNNSRFGSKKRIF</sequence>
<comment type="function">
    <text evidence="1">Exhibits natriuretic and vasodepressor activity.</text>
</comment>
<comment type="subcellular location">
    <subcellularLocation>
        <location>Secreted</location>
    </subcellularLocation>
</comment>
<comment type="tissue specificity">
    <text evidence="3">Heart atrium and ventricle, and to a very low extent in brain.</text>
</comment>
<comment type="similarity">
    <text evidence="4">Belongs to the natriuretic peptide family.</text>
</comment>
<name>ANFV_ACITR</name>